<protein>
    <recommendedName>
        <fullName>NADH-ubiquinone oxidoreductase chain 5</fullName>
        <ecNumber>7.1.1.2</ecNumber>
    </recommendedName>
    <alternativeName>
        <fullName>NADH dehydrogenase subunit 5</fullName>
    </alternativeName>
</protein>
<name>NU5M_ARTSF</name>
<feature type="chain" id="PRO_0000118062" description="NADH-ubiquinone oxidoreductase chain 5">
    <location>
        <begin position="1"/>
        <end position="541"/>
    </location>
</feature>
<feature type="transmembrane region" description="Helical" evidence="2">
    <location>
        <begin position="17"/>
        <end position="37"/>
    </location>
</feature>
<feature type="transmembrane region" description="Helical" evidence="2">
    <location>
        <begin position="48"/>
        <end position="70"/>
    </location>
</feature>
<feature type="transmembrane region" description="Helical" evidence="2">
    <location>
        <begin position="74"/>
        <end position="94"/>
    </location>
</feature>
<feature type="transmembrane region" description="Helical" evidence="2">
    <location>
        <begin position="98"/>
        <end position="118"/>
    </location>
</feature>
<feature type="transmembrane region" description="Helical" evidence="2">
    <location>
        <begin position="130"/>
        <end position="150"/>
    </location>
</feature>
<feature type="transmembrane region" description="Helical" evidence="2">
    <location>
        <begin position="157"/>
        <end position="177"/>
    </location>
</feature>
<feature type="transmembrane region" description="Helical" evidence="2">
    <location>
        <begin position="191"/>
        <end position="213"/>
    </location>
</feature>
<feature type="transmembrane region" description="Helical" evidence="2">
    <location>
        <begin position="226"/>
        <end position="246"/>
    </location>
</feature>
<feature type="transmembrane region" description="Helical" evidence="2">
    <location>
        <begin position="263"/>
        <end position="283"/>
    </location>
</feature>
<feature type="transmembrane region" description="Helical" evidence="2">
    <location>
        <begin position="285"/>
        <end position="305"/>
    </location>
</feature>
<feature type="transmembrane region" description="Helical" evidence="2">
    <location>
        <begin position="322"/>
        <end position="342"/>
    </location>
</feature>
<feature type="transmembrane region" description="Helical" evidence="2">
    <location>
        <begin position="353"/>
        <end position="373"/>
    </location>
</feature>
<feature type="transmembrane region" description="Helical" evidence="2">
    <location>
        <begin position="404"/>
        <end position="424"/>
    </location>
</feature>
<feature type="transmembrane region" description="Helical" evidence="2">
    <location>
        <begin position="429"/>
        <end position="449"/>
    </location>
</feature>
<feature type="transmembrane region" description="Helical" evidence="2">
    <location>
        <begin position="455"/>
        <end position="475"/>
    </location>
</feature>
<feature type="transmembrane region" description="Helical" evidence="2">
    <location>
        <begin position="518"/>
        <end position="538"/>
    </location>
</feature>
<proteinExistence type="inferred from homology"/>
<keyword id="KW-0249">Electron transport</keyword>
<keyword id="KW-0472">Membrane</keyword>
<keyword id="KW-0496">Mitochondrion</keyword>
<keyword id="KW-0999">Mitochondrion inner membrane</keyword>
<keyword id="KW-0520">NAD</keyword>
<keyword id="KW-0679">Respiratory chain</keyword>
<keyword id="KW-1278">Translocase</keyword>
<keyword id="KW-0812">Transmembrane</keyword>
<keyword id="KW-1133">Transmembrane helix</keyword>
<keyword id="KW-0813">Transport</keyword>
<keyword id="KW-0830">Ubiquinone</keyword>
<reference key="1">
    <citation type="journal article" date="1994" name="J. Mol. Evol.">
        <title>Speciation in the Artemia genus: mitochondrial DNA analysis of bisexual and parthenogenetic brine shrimps.</title>
        <authorList>
            <person name="Perez M.L."/>
            <person name="Valverde J.R."/>
            <person name="Batuecas B."/>
            <person name="Amat F."/>
            <person name="Marco R."/>
            <person name="Garesse R."/>
        </authorList>
    </citation>
    <scope>NUCLEOTIDE SEQUENCE [GENOMIC DNA]</scope>
</reference>
<accession>Q37710</accession>
<sequence length="541" mass="60291">MCISLHLTVYRSNKCLLLIFIIPISWNLLIKNILFAFGLSSVLWLAKTIIHLLSSLNSSQVMIYSSYYMMGETFVNRFMYMMLGFISSMVLLIMSSDGLSLMLGWDGLGITSYLLIMFYKNYNSSSSGMITILSNRVGDVLILWSLGLMFYSKSWDYMFLSYFSLSIMLLFILSSFTKSAQLPFSAWLPAAMAAPTPVSSLVHSSTLVTAGIYLMIRLSPSFEESGCFLLVVMGALTSFFSGLAAFGENDLKRVIALSTLSQLGVMMFSLGLGLTLFCYFHLFAHALFKALLFMCSGVVIHSLGVQDNRRMGGVSSMLPYTSYIILVCSLSLMGFPYLSGFFSKDLIIESSESLCMLFPSVLMLVSCLLTSTYSSRIAMVCLCSYNYNLSCQYSDEEGEYLTPLFVLYWGAVMGGYIFLLMFSGGDVSIILGPLKSFLLLSLITVGVILPYFVKSFSLSLSHYVSSMMFLPFITGRTSFMPLLMGELLYHEGDCGWVEEAGPSLIHHNSLRGSSLFSFLTSSPYKVLILSSLLFTLFMYFY</sequence>
<geneLocation type="mitochondrion"/>
<dbReference type="EC" id="7.1.1.2"/>
<dbReference type="EMBL" id="X69067">
    <property type="protein sequence ID" value="CAA48813.1"/>
    <property type="molecule type" value="Genomic_DNA"/>
</dbReference>
<dbReference type="PIR" id="S60645">
    <property type="entry name" value="S60645"/>
</dbReference>
<dbReference type="RefSeq" id="NP_007115.1">
    <property type="nucleotide sequence ID" value="NC_001620.1"/>
</dbReference>
<dbReference type="SMR" id="Q37710"/>
<dbReference type="GeneID" id="807788"/>
<dbReference type="KEGG" id="afra:807788"/>
<dbReference type="CTD" id="4540"/>
<dbReference type="GO" id="GO:0005743">
    <property type="term" value="C:mitochondrial inner membrane"/>
    <property type="evidence" value="ECO:0007669"/>
    <property type="project" value="UniProtKB-SubCell"/>
</dbReference>
<dbReference type="GO" id="GO:0008137">
    <property type="term" value="F:NADH dehydrogenase (ubiquinone) activity"/>
    <property type="evidence" value="ECO:0007669"/>
    <property type="project" value="UniProtKB-EC"/>
</dbReference>
<dbReference type="GO" id="GO:0042773">
    <property type="term" value="P:ATP synthesis coupled electron transport"/>
    <property type="evidence" value="ECO:0007669"/>
    <property type="project" value="InterPro"/>
</dbReference>
<dbReference type="GO" id="GO:0015990">
    <property type="term" value="P:electron transport coupled proton transport"/>
    <property type="evidence" value="ECO:0007669"/>
    <property type="project" value="TreeGrafter"/>
</dbReference>
<dbReference type="InterPro" id="IPR010934">
    <property type="entry name" value="NADH_DH_su5_C"/>
</dbReference>
<dbReference type="InterPro" id="IPR001750">
    <property type="entry name" value="ND/Mrp_TM"/>
</dbReference>
<dbReference type="InterPro" id="IPR003945">
    <property type="entry name" value="NU5C-like"/>
</dbReference>
<dbReference type="PANTHER" id="PTHR42829">
    <property type="entry name" value="NADH-UBIQUINONE OXIDOREDUCTASE CHAIN 5"/>
    <property type="match status" value="1"/>
</dbReference>
<dbReference type="PANTHER" id="PTHR42829:SF2">
    <property type="entry name" value="NADH-UBIQUINONE OXIDOREDUCTASE CHAIN 5"/>
    <property type="match status" value="1"/>
</dbReference>
<dbReference type="Pfam" id="PF06455">
    <property type="entry name" value="NADH5_C"/>
    <property type="match status" value="1"/>
</dbReference>
<dbReference type="Pfam" id="PF00361">
    <property type="entry name" value="Proton_antipo_M"/>
    <property type="match status" value="1"/>
</dbReference>
<dbReference type="PRINTS" id="PR01434">
    <property type="entry name" value="NADHDHGNASE5"/>
</dbReference>
<organism>
    <name type="scientific">Artemia franciscana</name>
    <name type="common">Brine shrimp</name>
    <name type="synonym">Artemia sanfranciscana</name>
    <dbReference type="NCBI Taxonomy" id="6661"/>
    <lineage>
        <taxon>Eukaryota</taxon>
        <taxon>Metazoa</taxon>
        <taxon>Ecdysozoa</taxon>
        <taxon>Arthropoda</taxon>
        <taxon>Crustacea</taxon>
        <taxon>Branchiopoda</taxon>
        <taxon>Anostraca</taxon>
        <taxon>Artemiidae</taxon>
        <taxon>Artemia</taxon>
    </lineage>
</organism>
<comment type="function">
    <text evidence="1">Core subunit of the mitochondrial membrane respiratory chain NADH dehydrogenase (Complex I) that is believed to belong to the minimal assembly required for catalysis. Complex I functions in the transfer of electrons from NADH to the respiratory chain. The immediate electron acceptor for the enzyme is believed to be ubiquinone (By similarity).</text>
</comment>
<comment type="catalytic activity">
    <reaction>
        <text>a ubiquinone + NADH + 5 H(+)(in) = a ubiquinol + NAD(+) + 4 H(+)(out)</text>
        <dbReference type="Rhea" id="RHEA:29091"/>
        <dbReference type="Rhea" id="RHEA-COMP:9565"/>
        <dbReference type="Rhea" id="RHEA-COMP:9566"/>
        <dbReference type="ChEBI" id="CHEBI:15378"/>
        <dbReference type="ChEBI" id="CHEBI:16389"/>
        <dbReference type="ChEBI" id="CHEBI:17976"/>
        <dbReference type="ChEBI" id="CHEBI:57540"/>
        <dbReference type="ChEBI" id="CHEBI:57945"/>
        <dbReference type="EC" id="7.1.1.2"/>
    </reaction>
</comment>
<comment type="subcellular location">
    <subcellularLocation>
        <location evidence="1">Mitochondrion inner membrane</location>
        <topology evidence="1">Multi-pass membrane protein</topology>
    </subcellularLocation>
</comment>
<comment type="similarity">
    <text evidence="3">Belongs to the complex I subunit 5 family.</text>
</comment>
<gene>
    <name type="primary">ND5</name>
    <name type="synonym">ND-5</name>
</gene>
<evidence type="ECO:0000250" key="1"/>
<evidence type="ECO:0000255" key="2"/>
<evidence type="ECO:0000305" key="3"/>